<keyword id="KW-0067">ATP-binding</keyword>
<keyword id="KW-0997">Cell inner membrane</keyword>
<keyword id="KW-1003">Cell membrane</keyword>
<keyword id="KW-0963">Cytoplasm</keyword>
<keyword id="KW-0472">Membrane</keyword>
<keyword id="KW-0479">Metal-binding</keyword>
<keyword id="KW-0547">Nucleotide-binding</keyword>
<keyword id="KW-0653">Protein transport</keyword>
<keyword id="KW-1278">Translocase</keyword>
<keyword id="KW-0811">Translocation</keyword>
<keyword id="KW-0813">Transport</keyword>
<keyword id="KW-0862">Zinc</keyword>
<feature type="chain" id="PRO_0000320976" description="Protein translocase subunit SecA">
    <location>
        <begin position="1"/>
        <end position="906"/>
    </location>
</feature>
<feature type="region of interest" description="Disordered" evidence="2">
    <location>
        <begin position="865"/>
        <end position="885"/>
    </location>
</feature>
<feature type="binding site" evidence="1">
    <location>
        <position position="86"/>
    </location>
    <ligand>
        <name>ATP</name>
        <dbReference type="ChEBI" id="CHEBI:30616"/>
    </ligand>
</feature>
<feature type="binding site" evidence="1">
    <location>
        <begin position="104"/>
        <end position="108"/>
    </location>
    <ligand>
        <name>ATP</name>
        <dbReference type="ChEBI" id="CHEBI:30616"/>
    </ligand>
</feature>
<feature type="binding site" evidence="1">
    <location>
        <position position="499"/>
    </location>
    <ligand>
        <name>ATP</name>
        <dbReference type="ChEBI" id="CHEBI:30616"/>
    </ligand>
</feature>
<feature type="binding site" evidence="1">
    <location>
        <position position="890"/>
    </location>
    <ligand>
        <name>Zn(2+)</name>
        <dbReference type="ChEBI" id="CHEBI:29105"/>
    </ligand>
</feature>
<feature type="binding site" evidence="1">
    <location>
        <position position="892"/>
    </location>
    <ligand>
        <name>Zn(2+)</name>
        <dbReference type="ChEBI" id="CHEBI:29105"/>
    </ligand>
</feature>
<feature type="binding site" evidence="1">
    <location>
        <position position="901"/>
    </location>
    <ligand>
        <name>Zn(2+)</name>
        <dbReference type="ChEBI" id="CHEBI:29105"/>
    </ligand>
</feature>
<feature type="binding site" evidence="1">
    <location>
        <position position="902"/>
    </location>
    <ligand>
        <name>Zn(2+)</name>
        <dbReference type="ChEBI" id="CHEBI:29105"/>
    </ligand>
</feature>
<organism>
    <name type="scientific">Rickettsia canadensis (strain McKiel)</name>
    <dbReference type="NCBI Taxonomy" id="293613"/>
    <lineage>
        <taxon>Bacteria</taxon>
        <taxon>Pseudomonadati</taxon>
        <taxon>Pseudomonadota</taxon>
        <taxon>Alphaproteobacteria</taxon>
        <taxon>Rickettsiales</taxon>
        <taxon>Rickettsiaceae</taxon>
        <taxon>Rickettsieae</taxon>
        <taxon>Rickettsia</taxon>
        <taxon>belli group</taxon>
    </lineage>
</organism>
<sequence>MLSILKKLFGTANDRTVKKLFSEITKINSLEPVIQKLSDEELKNKTVEFKEKLKNGATLDDILYEAFAVVRESARRVCGMRHFDVQLIGGLILHQGMITEMRTGEGKTLVATLPAYLNALTGKGVHVVTVNDYLASRDSASMGKIYNFLGLSVGCIVAGMSDEAKRAAYNADITHATNNELGFDYLRDNMKYSIQERVLRPFNFAIIDEVDSILIDEARTPLVISGPVNDNSELYTKIDKIVRQLKAGDFEKDEKLKTIHLTELGITHIESLLSNENIIKPDSGLYDFENLTLVHYINQALRAHNMFNVDVDYLVRDGQVMIIDEFTGRVMEGRRYSEGLHQALEAKENVKIQNENQTLASITFQNYFRNYPKLSGMTGTAMTEAPELKDIYNLDVVAVPTHNKVTRVDLDDEIYGSKKEKYDAILKLIKDCYNRGQPILVGTISIEKSEELSSVLNKEKIPHKILNAKFHEQEAFIIAQAGRFRAVTIATNMAGRGTDIMLGGNPEMLIEQLAKDHSYEAKIAEIKAQIAEEKKKVIEAGGLFVIGTERHESRRIDNQLRGRSGRQGDPGKTQFFLSLDDDLMRIFASERISGVLRTLGLKDGEAIHHPMISRSLEKAQQKVEGHNYEIRKNLLRFDDVMNDQRKIIYEQRTEIIKSKDSYDFLNSTTAELAKKIVLTFMPAGSYREDWDIENLSVELHRIFSIKFDHNLVSKNDVTEEEITKSVIQMAHDIYKSKEESYSSELMHNAVKYILLTTLDQVWKDHLYSLDHLRQGISLRAYAQQDPLSEYKREAFNLFEQMLDNLKELFIQTVYHFHIDLKHVQKEDVSLEHKKFQKNMQESREDPAFSKYNAGSSLEIDLKPVVSRIDPKDRNPEDPTSWGRVSRNELCPCRSGKKYKYCHGANA</sequence>
<dbReference type="EC" id="7.4.2.8" evidence="1"/>
<dbReference type="EMBL" id="CP000409">
    <property type="protein sequence ID" value="ABV73343.1"/>
    <property type="molecule type" value="Genomic_DNA"/>
</dbReference>
<dbReference type="RefSeq" id="WP_012148542.1">
    <property type="nucleotide sequence ID" value="NC_009879.1"/>
</dbReference>
<dbReference type="SMR" id="A8EYB0"/>
<dbReference type="STRING" id="293613.A1E_01990"/>
<dbReference type="KEGG" id="rcm:A1E_01990"/>
<dbReference type="eggNOG" id="COG0653">
    <property type="taxonomic scope" value="Bacteria"/>
</dbReference>
<dbReference type="HOGENOM" id="CLU_005314_3_0_5"/>
<dbReference type="Proteomes" id="UP000007056">
    <property type="component" value="Chromosome"/>
</dbReference>
<dbReference type="GO" id="GO:0031522">
    <property type="term" value="C:cell envelope Sec protein transport complex"/>
    <property type="evidence" value="ECO:0007669"/>
    <property type="project" value="TreeGrafter"/>
</dbReference>
<dbReference type="GO" id="GO:0005829">
    <property type="term" value="C:cytosol"/>
    <property type="evidence" value="ECO:0007669"/>
    <property type="project" value="TreeGrafter"/>
</dbReference>
<dbReference type="GO" id="GO:0005886">
    <property type="term" value="C:plasma membrane"/>
    <property type="evidence" value="ECO:0007669"/>
    <property type="project" value="UniProtKB-SubCell"/>
</dbReference>
<dbReference type="GO" id="GO:0005524">
    <property type="term" value="F:ATP binding"/>
    <property type="evidence" value="ECO:0007669"/>
    <property type="project" value="UniProtKB-UniRule"/>
</dbReference>
<dbReference type="GO" id="GO:0046872">
    <property type="term" value="F:metal ion binding"/>
    <property type="evidence" value="ECO:0007669"/>
    <property type="project" value="UniProtKB-KW"/>
</dbReference>
<dbReference type="GO" id="GO:0008564">
    <property type="term" value="F:protein-exporting ATPase activity"/>
    <property type="evidence" value="ECO:0007669"/>
    <property type="project" value="UniProtKB-EC"/>
</dbReference>
<dbReference type="GO" id="GO:0065002">
    <property type="term" value="P:intracellular protein transmembrane transport"/>
    <property type="evidence" value="ECO:0007669"/>
    <property type="project" value="UniProtKB-UniRule"/>
</dbReference>
<dbReference type="GO" id="GO:0017038">
    <property type="term" value="P:protein import"/>
    <property type="evidence" value="ECO:0007669"/>
    <property type="project" value="InterPro"/>
</dbReference>
<dbReference type="GO" id="GO:0006605">
    <property type="term" value="P:protein targeting"/>
    <property type="evidence" value="ECO:0007669"/>
    <property type="project" value="UniProtKB-UniRule"/>
</dbReference>
<dbReference type="GO" id="GO:0043952">
    <property type="term" value="P:protein transport by the Sec complex"/>
    <property type="evidence" value="ECO:0007669"/>
    <property type="project" value="TreeGrafter"/>
</dbReference>
<dbReference type="CDD" id="cd17928">
    <property type="entry name" value="DEXDc_SecA"/>
    <property type="match status" value="1"/>
</dbReference>
<dbReference type="CDD" id="cd18803">
    <property type="entry name" value="SF2_C_secA"/>
    <property type="match status" value="1"/>
</dbReference>
<dbReference type="FunFam" id="3.40.50.300:FF:000113">
    <property type="entry name" value="Preprotein translocase subunit SecA"/>
    <property type="match status" value="1"/>
</dbReference>
<dbReference type="FunFam" id="3.90.1440.10:FF:000001">
    <property type="entry name" value="Preprotein translocase subunit SecA"/>
    <property type="match status" value="1"/>
</dbReference>
<dbReference type="FunFam" id="1.10.3060.10:FF:000003">
    <property type="entry name" value="Protein translocase subunit SecA"/>
    <property type="match status" value="1"/>
</dbReference>
<dbReference type="FunFam" id="3.40.50.300:FF:000334">
    <property type="entry name" value="Protein translocase subunit SecA"/>
    <property type="match status" value="1"/>
</dbReference>
<dbReference type="Gene3D" id="1.10.3060.10">
    <property type="entry name" value="Helical scaffold and wing domains of SecA"/>
    <property type="match status" value="1"/>
</dbReference>
<dbReference type="Gene3D" id="3.40.50.300">
    <property type="entry name" value="P-loop containing nucleotide triphosphate hydrolases"/>
    <property type="match status" value="2"/>
</dbReference>
<dbReference type="Gene3D" id="3.90.1440.10">
    <property type="entry name" value="SecA, preprotein cross-linking domain"/>
    <property type="match status" value="1"/>
</dbReference>
<dbReference type="HAMAP" id="MF_01382">
    <property type="entry name" value="SecA"/>
    <property type="match status" value="1"/>
</dbReference>
<dbReference type="InterPro" id="IPR014001">
    <property type="entry name" value="Helicase_ATP-bd"/>
</dbReference>
<dbReference type="InterPro" id="IPR001650">
    <property type="entry name" value="Helicase_C-like"/>
</dbReference>
<dbReference type="InterPro" id="IPR027417">
    <property type="entry name" value="P-loop_NTPase"/>
</dbReference>
<dbReference type="InterPro" id="IPR004027">
    <property type="entry name" value="SEC_C_motif"/>
</dbReference>
<dbReference type="InterPro" id="IPR000185">
    <property type="entry name" value="SecA"/>
</dbReference>
<dbReference type="InterPro" id="IPR020937">
    <property type="entry name" value="SecA_CS"/>
</dbReference>
<dbReference type="InterPro" id="IPR011115">
    <property type="entry name" value="SecA_DEAD"/>
</dbReference>
<dbReference type="InterPro" id="IPR014018">
    <property type="entry name" value="SecA_motor_DEAD"/>
</dbReference>
<dbReference type="InterPro" id="IPR011130">
    <property type="entry name" value="SecA_preprotein_X-link_dom"/>
</dbReference>
<dbReference type="InterPro" id="IPR044722">
    <property type="entry name" value="SecA_SF2_C"/>
</dbReference>
<dbReference type="InterPro" id="IPR011116">
    <property type="entry name" value="SecA_Wing/Scaffold"/>
</dbReference>
<dbReference type="InterPro" id="IPR036266">
    <property type="entry name" value="SecA_Wing/Scaffold_sf"/>
</dbReference>
<dbReference type="InterPro" id="IPR036670">
    <property type="entry name" value="SecA_X-link_sf"/>
</dbReference>
<dbReference type="NCBIfam" id="NF009538">
    <property type="entry name" value="PRK12904.1"/>
    <property type="match status" value="1"/>
</dbReference>
<dbReference type="NCBIfam" id="TIGR00963">
    <property type="entry name" value="secA"/>
    <property type="match status" value="1"/>
</dbReference>
<dbReference type="PANTHER" id="PTHR30612:SF0">
    <property type="entry name" value="CHLOROPLAST PROTEIN-TRANSPORTING ATPASE"/>
    <property type="match status" value="1"/>
</dbReference>
<dbReference type="PANTHER" id="PTHR30612">
    <property type="entry name" value="SECA INNER MEMBRANE COMPONENT OF SEC PROTEIN SECRETION SYSTEM"/>
    <property type="match status" value="1"/>
</dbReference>
<dbReference type="Pfam" id="PF21090">
    <property type="entry name" value="P-loop_SecA"/>
    <property type="match status" value="1"/>
</dbReference>
<dbReference type="Pfam" id="PF02810">
    <property type="entry name" value="SEC-C"/>
    <property type="match status" value="1"/>
</dbReference>
<dbReference type="Pfam" id="PF07517">
    <property type="entry name" value="SecA_DEAD"/>
    <property type="match status" value="1"/>
</dbReference>
<dbReference type="Pfam" id="PF01043">
    <property type="entry name" value="SecA_PP_bind"/>
    <property type="match status" value="1"/>
</dbReference>
<dbReference type="Pfam" id="PF07516">
    <property type="entry name" value="SecA_SW"/>
    <property type="match status" value="1"/>
</dbReference>
<dbReference type="PRINTS" id="PR00906">
    <property type="entry name" value="SECA"/>
</dbReference>
<dbReference type="SMART" id="SM00957">
    <property type="entry name" value="SecA_DEAD"/>
    <property type="match status" value="1"/>
</dbReference>
<dbReference type="SMART" id="SM00958">
    <property type="entry name" value="SecA_PP_bind"/>
    <property type="match status" value="1"/>
</dbReference>
<dbReference type="SUPFAM" id="SSF81886">
    <property type="entry name" value="Helical scaffold and wing domains of SecA"/>
    <property type="match status" value="1"/>
</dbReference>
<dbReference type="SUPFAM" id="SSF52540">
    <property type="entry name" value="P-loop containing nucleoside triphosphate hydrolases"/>
    <property type="match status" value="2"/>
</dbReference>
<dbReference type="SUPFAM" id="SSF81767">
    <property type="entry name" value="Pre-protein crosslinking domain of SecA"/>
    <property type="match status" value="1"/>
</dbReference>
<dbReference type="PROSITE" id="PS01312">
    <property type="entry name" value="SECA"/>
    <property type="match status" value="1"/>
</dbReference>
<dbReference type="PROSITE" id="PS51196">
    <property type="entry name" value="SECA_MOTOR_DEAD"/>
    <property type="match status" value="1"/>
</dbReference>
<reference key="1">
    <citation type="submission" date="2007-09" db="EMBL/GenBank/DDBJ databases">
        <title>Complete genome sequence of Rickettsia canadensis.</title>
        <authorList>
            <person name="Madan A."/>
            <person name="Fahey J."/>
            <person name="Helton E."/>
            <person name="Ketteman M."/>
            <person name="Madan A."/>
            <person name="Rodrigues S."/>
            <person name="Sanchez A."/>
            <person name="Whiting M."/>
            <person name="Dasch G."/>
            <person name="Eremeeva M."/>
        </authorList>
    </citation>
    <scope>NUCLEOTIDE SEQUENCE [LARGE SCALE GENOMIC DNA]</scope>
    <source>
        <strain>McKiel</strain>
    </source>
</reference>
<protein>
    <recommendedName>
        <fullName evidence="1">Protein translocase subunit SecA</fullName>
        <ecNumber evidence="1">7.4.2.8</ecNumber>
    </recommendedName>
</protein>
<accession>A8EYB0</accession>
<proteinExistence type="inferred from homology"/>
<comment type="function">
    <text evidence="1">Part of the Sec protein translocase complex. Interacts with the SecYEG preprotein conducting channel. Has a central role in coupling the hydrolysis of ATP to the transfer of proteins into and across the cell membrane, serving both as a receptor for the preprotein-SecB complex and as an ATP-driven molecular motor driving the stepwise translocation of polypeptide chains across the membrane.</text>
</comment>
<comment type="catalytic activity">
    <reaction evidence="1">
        <text>ATP + H2O + cellular proteinSide 1 = ADP + phosphate + cellular proteinSide 2.</text>
        <dbReference type="EC" id="7.4.2.8"/>
    </reaction>
</comment>
<comment type="cofactor">
    <cofactor evidence="1">
        <name>Zn(2+)</name>
        <dbReference type="ChEBI" id="CHEBI:29105"/>
    </cofactor>
    <text evidence="1">May bind 1 zinc ion per subunit.</text>
</comment>
<comment type="subunit">
    <text evidence="1">Monomer and homodimer. Part of the essential Sec protein translocation apparatus which comprises SecA, SecYEG and auxiliary proteins SecDF-YajC and YidC.</text>
</comment>
<comment type="subcellular location">
    <subcellularLocation>
        <location evidence="1">Cell inner membrane</location>
        <topology evidence="1">Peripheral membrane protein</topology>
        <orientation evidence="1">Cytoplasmic side</orientation>
    </subcellularLocation>
    <subcellularLocation>
        <location evidence="1">Cytoplasm</location>
    </subcellularLocation>
    <text evidence="1">Distribution is 50-50.</text>
</comment>
<comment type="similarity">
    <text evidence="1">Belongs to the SecA family.</text>
</comment>
<evidence type="ECO:0000255" key="1">
    <source>
        <dbReference type="HAMAP-Rule" id="MF_01382"/>
    </source>
</evidence>
<evidence type="ECO:0000256" key="2">
    <source>
        <dbReference type="SAM" id="MobiDB-lite"/>
    </source>
</evidence>
<gene>
    <name evidence="1" type="primary">secA</name>
    <name type="ordered locus">A1E_01990</name>
</gene>
<name>SECA_RICCK</name>